<proteinExistence type="inferred from homology"/>
<keyword id="KW-0413">Isomerase</keyword>
<sequence length="228" mass="25550">MKDVKALKLMTLNDVLSQINGDMTLGIGTGSTMELLLPQMAQLIKERGYNITGVCTSNKIAFLAKELGIKICEINDVDHIDLAIDGADEVDPSLNIIKGGGGALFREKVIDEMASRFVVVVDETKIVQYLGETFKLPVEVDKFNWYHILRKIESYADIKVERRVNEDVAFITDNGNYILDCKLPKGIDPYKFHEYLIHLTGVFETGYFLDMADQVIVGTQEGVKILEK</sequence>
<comment type="function">
    <text evidence="1">Catalyzes the reversible conversion of ribose-5-phosphate to ribulose 5-phosphate.</text>
</comment>
<comment type="catalytic activity">
    <reaction evidence="1">
        <text>aldehydo-D-ribose 5-phosphate = D-ribulose 5-phosphate</text>
        <dbReference type="Rhea" id="RHEA:14657"/>
        <dbReference type="ChEBI" id="CHEBI:58121"/>
        <dbReference type="ChEBI" id="CHEBI:58273"/>
        <dbReference type="EC" id="5.3.1.6"/>
    </reaction>
</comment>
<comment type="pathway">
    <text evidence="1">Carbohydrate degradation; pentose phosphate pathway; D-ribose 5-phosphate from D-ribulose 5-phosphate (non-oxidative stage): step 1/1.</text>
</comment>
<comment type="subunit">
    <text evidence="1">Homodimer.</text>
</comment>
<comment type="similarity">
    <text evidence="1">Belongs to the ribose 5-phosphate isomerase family.</text>
</comment>
<name>RPIA_STAAN</name>
<reference key="1">
    <citation type="journal article" date="2001" name="Lancet">
        <title>Whole genome sequencing of meticillin-resistant Staphylococcus aureus.</title>
        <authorList>
            <person name="Kuroda M."/>
            <person name="Ohta T."/>
            <person name="Uchiyama I."/>
            <person name="Baba T."/>
            <person name="Yuzawa H."/>
            <person name="Kobayashi I."/>
            <person name="Cui L."/>
            <person name="Oguchi A."/>
            <person name="Aoki K."/>
            <person name="Nagai Y."/>
            <person name="Lian J.-Q."/>
            <person name="Ito T."/>
            <person name="Kanamori M."/>
            <person name="Matsumaru H."/>
            <person name="Maruyama A."/>
            <person name="Murakami H."/>
            <person name="Hosoyama A."/>
            <person name="Mizutani-Ui Y."/>
            <person name="Takahashi N.K."/>
            <person name="Sawano T."/>
            <person name="Inoue R."/>
            <person name="Kaito C."/>
            <person name="Sekimizu K."/>
            <person name="Hirakawa H."/>
            <person name="Kuhara S."/>
            <person name="Goto S."/>
            <person name="Yabuzaki J."/>
            <person name="Kanehisa M."/>
            <person name="Yamashita A."/>
            <person name="Oshima K."/>
            <person name="Furuya K."/>
            <person name="Yoshino C."/>
            <person name="Shiba T."/>
            <person name="Hattori M."/>
            <person name="Ogasawara N."/>
            <person name="Hayashi H."/>
            <person name="Hiramatsu K."/>
        </authorList>
    </citation>
    <scope>NUCLEOTIDE SEQUENCE [LARGE SCALE GENOMIC DNA]</scope>
    <source>
        <strain>N315</strain>
    </source>
</reference>
<accession>P66695</accession>
<accession>Q99RT7</accession>
<feature type="chain" id="PRO_0000158465" description="Ribose-5-phosphate isomerase A">
    <location>
        <begin position="1"/>
        <end position="228"/>
    </location>
</feature>
<feature type="active site" description="Proton acceptor" evidence="1">
    <location>
        <position position="107"/>
    </location>
</feature>
<feature type="binding site" evidence="1">
    <location>
        <begin position="29"/>
        <end position="32"/>
    </location>
    <ligand>
        <name>substrate</name>
    </ligand>
</feature>
<feature type="binding site" evidence="1">
    <location>
        <begin position="85"/>
        <end position="88"/>
    </location>
    <ligand>
        <name>substrate</name>
    </ligand>
</feature>
<feature type="binding site" evidence="1">
    <location>
        <begin position="98"/>
        <end position="101"/>
    </location>
    <ligand>
        <name>substrate</name>
    </ligand>
</feature>
<feature type="binding site" evidence="1">
    <location>
        <position position="125"/>
    </location>
    <ligand>
        <name>substrate</name>
    </ligand>
</feature>
<organism>
    <name type="scientific">Staphylococcus aureus (strain N315)</name>
    <dbReference type="NCBI Taxonomy" id="158879"/>
    <lineage>
        <taxon>Bacteria</taxon>
        <taxon>Bacillati</taxon>
        <taxon>Bacillota</taxon>
        <taxon>Bacilli</taxon>
        <taxon>Bacillales</taxon>
        <taxon>Staphylococcaceae</taxon>
        <taxon>Staphylococcus</taxon>
    </lineage>
</organism>
<protein>
    <recommendedName>
        <fullName evidence="1">Ribose-5-phosphate isomerase A</fullName>
        <ecNumber evidence="1">5.3.1.6</ecNumber>
    </recommendedName>
    <alternativeName>
        <fullName evidence="1">Phosphoriboisomerase A</fullName>
        <shortName evidence="1">PRI</shortName>
    </alternativeName>
</protein>
<dbReference type="EC" id="5.3.1.6" evidence="1"/>
<dbReference type="EMBL" id="BA000018">
    <property type="protein sequence ID" value="BAB43428.1"/>
    <property type="molecule type" value="Genomic_DNA"/>
</dbReference>
<dbReference type="PIR" id="C90033">
    <property type="entry name" value="C90033"/>
</dbReference>
<dbReference type="RefSeq" id="WP_000655864.1">
    <property type="nucleotide sequence ID" value="NC_002745.2"/>
</dbReference>
<dbReference type="SMR" id="P66695"/>
<dbReference type="EnsemblBacteria" id="BAB43428">
    <property type="protein sequence ID" value="BAB43428"/>
    <property type="gene ID" value="BAB43428"/>
</dbReference>
<dbReference type="KEGG" id="sau:SA2127"/>
<dbReference type="HOGENOM" id="CLU_056590_1_0_9"/>
<dbReference type="UniPathway" id="UPA00115">
    <property type="reaction ID" value="UER00412"/>
</dbReference>
<dbReference type="GO" id="GO:0005829">
    <property type="term" value="C:cytosol"/>
    <property type="evidence" value="ECO:0007669"/>
    <property type="project" value="TreeGrafter"/>
</dbReference>
<dbReference type="GO" id="GO:0004751">
    <property type="term" value="F:ribose-5-phosphate isomerase activity"/>
    <property type="evidence" value="ECO:0007669"/>
    <property type="project" value="UniProtKB-UniRule"/>
</dbReference>
<dbReference type="GO" id="GO:0006014">
    <property type="term" value="P:D-ribose metabolic process"/>
    <property type="evidence" value="ECO:0007669"/>
    <property type="project" value="TreeGrafter"/>
</dbReference>
<dbReference type="GO" id="GO:0009052">
    <property type="term" value="P:pentose-phosphate shunt, non-oxidative branch"/>
    <property type="evidence" value="ECO:0007669"/>
    <property type="project" value="UniProtKB-UniRule"/>
</dbReference>
<dbReference type="CDD" id="cd01398">
    <property type="entry name" value="RPI_A"/>
    <property type="match status" value="1"/>
</dbReference>
<dbReference type="FunFam" id="3.40.50.1360:FF:000001">
    <property type="entry name" value="Ribose-5-phosphate isomerase A"/>
    <property type="match status" value="1"/>
</dbReference>
<dbReference type="Gene3D" id="3.30.70.260">
    <property type="match status" value="1"/>
</dbReference>
<dbReference type="Gene3D" id="3.40.50.1360">
    <property type="match status" value="1"/>
</dbReference>
<dbReference type="HAMAP" id="MF_00170">
    <property type="entry name" value="Rib_5P_isom_A"/>
    <property type="match status" value="1"/>
</dbReference>
<dbReference type="InterPro" id="IPR037171">
    <property type="entry name" value="NagB/RpiA_transferase-like"/>
</dbReference>
<dbReference type="InterPro" id="IPR020672">
    <property type="entry name" value="Ribose5P_isomerase_typA_subgr"/>
</dbReference>
<dbReference type="InterPro" id="IPR004788">
    <property type="entry name" value="Ribose5P_isomerase_type_A"/>
</dbReference>
<dbReference type="NCBIfam" id="NF001924">
    <property type="entry name" value="PRK00702.1"/>
    <property type="match status" value="1"/>
</dbReference>
<dbReference type="NCBIfam" id="NF010585">
    <property type="entry name" value="PRK13978.1"/>
    <property type="match status" value="1"/>
</dbReference>
<dbReference type="NCBIfam" id="TIGR00021">
    <property type="entry name" value="rpiA"/>
    <property type="match status" value="1"/>
</dbReference>
<dbReference type="PANTHER" id="PTHR11934">
    <property type="entry name" value="RIBOSE-5-PHOSPHATE ISOMERASE"/>
    <property type="match status" value="1"/>
</dbReference>
<dbReference type="PANTHER" id="PTHR11934:SF0">
    <property type="entry name" value="RIBOSE-5-PHOSPHATE ISOMERASE"/>
    <property type="match status" value="1"/>
</dbReference>
<dbReference type="Pfam" id="PF06026">
    <property type="entry name" value="Rib_5-P_isom_A"/>
    <property type="match status" value="1"/>
</dbReference>
<dbReference type="SUPFAM" id="SSF75445">
    <property type="entry name" value="D-ribose-5-phosphate isomerase (RpiA), lid domain"/>
    <property type="match status" value="1"/>
</dbReference>
<dbReference type="SUPFAM" id="SSF100950">
    <property type="entry name" value="NagB/RpiA/CoA transferase-like"/>
    <property type="match status" value="1"/>
</dbReference>
<evidence type="ECO:0000255" key="1">
    <source>
        <dbReference type="HAMAP-Rule" id="MF_00170"/>
    </source>
</evidence>
<gene>
    <name evidence="1" type="primary">rpiA</name>
    <name type="ordered locus">SA2127</name>
</gene>